<sequence>MIRDLEYYDSPILRKVAAPVTEITDELRQLVLDMSETMAFYKGVGLAAPQVGQSISLFIMGVERELEDGELVFCDFPRVFINPVITQKSEQLVYGNEGCLSIPGLRGEVARPDKITVSAKNLDGQQFSLALEGFLARIVMHETDHLHGVLYIDRMSDKDKTKQFKNNLEKIRRKYSILRGL</sequence>
<name>DEF_CHLTA</name>
<keyword id="KW-0378">Hydrolase</keyword>
<keyword id="KW-0408">Iron</keyword>
<keyword id="KW-0479">Metal-binding</keyword>
<keyword id="KW-0648">Protein biosynthesis</keyword>
<proteinExistence type="inferred from homology"/>
<gene>
    <name evidence="1" type="primary">def</name>
    <name type="ordered locus">CTA_0382</name>
</gene>
<dbReference type="EC" id="3.5.1.88" evidence="1"/>
<dbReference type="EMBL" id="CP000051">
    <property type="protein sequence ID" value="AAX50617.1"/>
    <property type="molecule type" value="Genomic_DNA"/>
</dbReference>
<dbReference type="RefSeq" id="WP_009871704.1">
    <property type="nucleotide sequence ID" value="NC_007429.1"/>
</dbReference>
<dbReference type="SMR" id="Q3KM05"/>
<dbReference type="KEGG" id="cta:CTA_0382"/>
<dbReference type="HOGENOM" id="CLU_061901_2_0_0"/>
<dbReference type="Proteomes" id="UP000002532">
    <property type="component" value="Chromosome"/>
</dbReference>
<dbReference type="GO" id="GO:0046872">
    <property type="term" value="F:metal ion binding"/>
    <property type="evidence" value="ECO:0007669"/>
    <property type="project" value="UniProtKB-KW"/>
</dbReference>
<dbReference type="GO" id="GO:0042586">
    <property type="term" value="F:peptide deformylase activity"/>
    <property type="evidence" value="ECO:0007669"/>
    <property type="project" value="UniProtKB-UniRule"/>
</dbReference>
<dbReference type="GO" id="GO:0043686">
    <property type="term" value="P:co-translational protein modification"/>
    <property type="evidence" value="ECO:0007669"/>
    <property type="project" value="TreeGrafter"/>
</dbReference>
<dbReference type="GO" id="GO:0006412">
    <property type="term" value="P:translation"/>
    <property type="evidence" value="ECO:0007669"/>
    <property type="project" value="UniProtKB-UniRule"/>
</dbReference>
<dbReference type="CDD" id="cd00487">
    <property type="entry name" value="Pep_deformylase"/>
    <property type="match status" value="1"/>
</dbReference>
<dbReference type="FunFam" id="3.90.45.10:FF:000016">
    <property type="entry name" value="Peptide deformylase"/>
    <property type="match status" value="1"/>
</dbReference>
<dbReference type="Gene3D" id="3.90.45.10">
    <property type="entry name" value="Peptide deformylase"/>
    <property type="match status" value="1"/>
</dbReference>
<dbReference type="HAMAP" id="MF_00163">
    <property type="entry name" value="Pep_deformylase"/>
    <property type="match status" value="1"/>
</dbReference>
<dbReference type="InterPro" id="IPR023635">
    <property type="entry name" value="Peptide_deformylase"/>
</dbReference>
<dbReference type="InterPro" id="IPR036821">
    <property type="entry name" value="Peptide_deformylase_sf"/>
</dbReference>
<dbReference type="NCBIfam" id="TIGR00079">
    <property type="entry name" value="pept_deformyl"/>
    <property type="match status" value="1"/>
</dbReference>
<dbReference type="NCBIfam" id="NF001159">
    <property type="entry name" value="PRK00150.1-3"/>
    <property type="match status" value="1"/>
</dbReference>
<dbReference type="PANTHER" id="PTHR10458">
    <property type="entry name" value="PEPTIDE DEFORMYLASE"/>
    <property type="match status" value="1"/>
</dbReference>
<dbReference type="PANTHER" id="PTHR10458:SF22">
    <property type="entry name" value="PEPTIDE DEFORMYLASE"/>
    <property type="match status" value="1"/>
</dbReference>
<dbReference type="Pfam" id="PF01327">
    <property type="entry name" value="Pep_deformylase"/>
    <property type="match status" value="1"/>
</dbReference>
<dbReference type="PIRSF" id="PIRSF004749">
    <property type="entry name" value="Pep_def"/>
    <property type="match status" value="1"/>
</dbReference>
<dbReference type="PRINTS" id="PR01576">
    <property type="entry name" value="PDEFORMYLASE"/>
</dbReference>
<dbReference type="SUPFAM" id="SSF56420">
    <property type="entry name" value="Peptide deformylase"/>
    <property type="match status" value="1"/>
</dbReference>
<accession>Q3KM05</accession>
<evidence type="ECO:0000255" key="1">
    <source>
        <dbReference type="HAMAP-Rule" id="MF_00163"/>
    </source>
</evidence>
<reference key="1">
    <citation type="journal article" date="2005" name="Infect. Immun.">
        <title>Comparative genomic analysis of Chlamydia trachomatis oculotropic and genitotropic strains.</title>
        <authorList>
            <person name="Carlson J.H."/>
            <person name="Porcella S.F."/>
            <person name="McClarty G."/>
            <person name="Caldwell H.D."/>
        </authorList>
    </citation>
    <scope>NUCLEOTIDE SEQUENCE [LARGE SCALE GENOMIC DNA]</scope>
    <source>
        <strain>ATCC VR-571B / DSM 19440 / HAR-13</strain>
    </source>
</reference>
<protein>
    <recommendedName>
        <fullName evidence="1">Peptide deformylase</fullName>
        <shortName evidence="1">PDF</shortName>
        <ecNumber evidence="1">3.5.1.88</ecNumber>
    </recommendedName>
    <alternativeName>
        <fullName evidence="1">Polypeptide deformylase</fullName>
    </alternativeName>
</protein>
<feature type="chain" id="PRO_0000301016" description="Peptide deformylase">
    <location>
        <begin position="1"/>
        <end position="181"/>
    </location>
</feature>
<feature type="active site" evidence="1">
    <location>
        <position position="142"/>
    </location>
</feature>
<feature type="binding site" evidence="1">
    <location>
        <position position="99"/>
    </location>
    <ligand>
        <name>Fe cation</name>
        <dbReference type="ChEBI" id="CHEBI:24875"/>
    </ligand>
</feature>
<feature type="binding site" evidence="1">
    <location>
        <position position="141"/>
    </location>
    <ligand>
        <name>Fe cation</name>
        <dbReference type="ChEBI" id="CHEBI:24875"/>
    </ligand>
</feature>
<feature type="binding site" evidence="1">
    <location>
        <position position="145"/>
    </location>
    <ligand>
        <name>Fe cation</name>
        <dbReference type="ChEBI" id="CHEBI:24875"/>
    </ligand>
</feature>
<comment type="function">
    <text evidence="1">Removes the formyl group from the N-terminal Met of newly synthesized proteins. Requires at least a dipeptide for an efficient rate of reaction. N-terminal L-methionine is a prerequisite for activity but the enzyme has broad specificity at other positions.</text>
</comment>
<comment type="catalytic activity">
    <reaction evidence="1">
        <text>N-terminal N-formyl-L-methionyl-[peptide] + H2O = N-terminal L-methionyl-[peptide] + formate</text>
        <dbReference type="Rhea" id="RHEA:24420"/>
        <dbReference type="Rhea" id="RHEA-COMP:10639"/>
        <dbReference type="Rhea" id="RHEA-COMP:10640"/>
        <dbReference type="ChEBI" id="CHEBI:15377"/>
        <dbReference type="ChEBI" id="CHEBI:15740"/>
        <dbReference type="ChEBI" id="CHEBI:49298"/>
        <dbReference type="ChEBI" id="CHEBI:64731"/>
        <dbReference type="EC" id="3.5.1.88"/>
    </reaction>
</comment>
<comment type="cofactor">
    <cofactor evidence="1">
        <name>Fe(2+)</name>
        <dbReference type="ChEBI" id="CHEBI:29033"/>
    </cofactor>
    <text evidence="1">Binds 1 Fe(2+) ion.</text>
</comment>
<comment type="similarity">
    <text evidence="1">Belongs to the polypeptide deformylase family.</text>
</comment>
<organism>
    <name type="scientific">Chlamydia trachomatis serovar A (strain ATCC VR-571B / DSM 19440 / HAR-13)</name>
    <dbReference type="NCBI Taxonomy" id="315277"/>
    <lineage>
        <taxon>Bacteria</taxon>
        <taxon>Pseudomonadati</taxon>
        <taxon>Chlamydiota</taxon>
        <taxon>Chlamydiia</taxon>
        <taxon>Chlamydiales</taxon>
        <taxon>Chlamydiaceae</taxon>
        <taxon>Chlamydia/Chlamydophila group</taxon>
        <taxon>Chlamydia</taxon>
    </lineage>
</organism>